<dbReference type="EMBL" id="CR628337">
    <property type="protein sequence ID" value="CAH14599.1"/>
    <property type="molecule type" value="Genomic_DNA"/>
</dbReference>
<dbReference type="RefSeq" id="WP_010946077.1">
    <property type="nucleotide sequence ID" value="NC_006369.1"/>
</dbReference>
<dbReference type="SMR" id="Q5WZL3"/>
<dbReference type="GeneID" id="57034331"/>
<dbReference type="KEGG" id="lpf:lpl0368"/>
<dbReference type="LegioList" id="lpl0368"/>
<dbReference type="HOGENOM" id="CLU_122625_1_3_6"/>
<dbReference type="Proteomes" id="UP000002517">
    <property type="component" value="Chromosome"/>
</dbReference>
<dbReference type="GO" id="GO:1990904">
    <property type="term" value="C:ribonucleoprotein complex"/>
    <property type="evidence" value="ECO:0007669"/>
    <property type="project" value="UniProtKB-KW"/>
</dbReference>
<dbReference type="GO" id="GO:0005840">
    <property type="term" value="C:ribosome"/>
    <property type="evidence" value="ECO:0007669"/>
    <property type="project" value="UniProtKB-KW"/>
</dbReference>
<dbReference type="GO" id="GO:0003735">
    <property type="term" value="F:structural constituent of ribosome"/>
    <property type="evidence" value="ECO:0007669"/>
    <property type="project" value="InterPro"/>
</dbReference>
<dbReference type="GO" id="GO:0000049">
    <property type="term" value="F:tRNA binding"/>
    <property type="evidence" value="ECO:0007669"/>
    <property type="project" value="UniProtKB-UniRule"/>
</dbReference>
<dbReference type="GO" id="GO:0006412">
    <property type="term" value="P:translation"/>
    <property type="evidence" value="ECO:0007669"/>
    <property type="project" value="UniProtKB-UniRule"/>
</dbReference>
<dbReference type="FunFam" id="3.30.70.600:FF:000001">
    <property type="entry name" value="30S ribosomal protein S10"/>
    <property type="match status" value="1"/>
</dbReference>
<dbReference type="Gene3D" id="3.30.70.600">
    <property type="entry name" value="Ribosomal protein S10 domain"/>
    <property type="match status" value="1"/>
</dbReference>
<dbReference type="HAMAP" id="MF_00508">
    <property type="entry name" value="Ribosomal_uS10"/>
    <property type="match status" value="1"/>
</dbReference>
<dbReference type="InterPro" id="IPR001848">
    <property type="entry name" value="Ribosomal_uS10"/>
</dbReference>
<dbReference type="InterPro" id="IPR027486">
    <property type="entry name" value="Ribosomal_uS10_dom"/>
</dbReference>
<dbReference type="InterPro" id="IPR036838">
    <property type="entry name" value="Ribosomal_uS10_dom_sf"/>
</dbReference>
<dbReference type="NCBIfam" id="NF001861">
    <property type="entry name" value="PRK00596.1"/>
    <property type="match status" value="1"/>
</dbReference>
<dbReference type="NCBIfam" id="TIGR01049">
    <property type="entry name" value="rpsJ_bact"/>
    <property type="match status" value="1"/>
</dbReference>
<dbReference type="PANTHER" id="PTHR11700">
    <property type="entry name" value="30S RIBOSOMAL PROTEIN S10 FAMILY MEMBER"/>
    <property type="match status" value="1"/>
</dbReference>
<dbReference type="Pfam" id="PF00338">
    <property type="entry name" value="Ribosomal_S10"/>
    <property type="match status" value="1"/>
</dbReference>
<dbReference type="PRINTS" id="PR00971">
    <property type="entry name" value="RIBOSOMALS10"/>
</dbReference>
<dbReference type="SMART" id="SM01403">
    <property type="entry name" value="Ribosomal_S10"/>
    <property type="match status" value="1"/>
</dbReference>
<dbReference type="SUPFAM" id="SSF54999">
    <property type="entry name" value="Ribosomal protein S10"/>
    <property type="match status" value="1"/>
</dbReference>
<feature type="chain" id="PRO_0000237055" description="Small ribosomal subunit protein uS10">
    <location>
        <begin position="1"/>
        <end position="105"/>
    </location>
</feature>
<evidence type="ECO:0000255" key="1">
    <source>
        <dbReference type="HAMAP-Rule" id="MF_00508"/>
    </source>
</evidence>
<evidence type="ECO:0000305" key="2"/>
<proteinExistence type="inferred from homology"/>
<gene>
    <name evidence="1" type="primary">rpsJ</name>
    <name type="ordered locus">lpl0368</name>
</gene>
<organism>
    <name type="scientific">Legionella pneumophila (strain Lens)</name>
    <dbReference type="NCBI Taxonomy" id="297245"/>
    <lineage>
        <taxon>Bacteria</taxon>
        <taxon>Pseudomonadati</taxon>
        <taxon>Pseudomonadota</taxon>
        <taxon>Gammaproteobacteria</taxon>
        <taxon>Legionellales</taxon>
        <taxon>Legionellaceae</taxon>
        <taxon>Legionella</taxon>
    </lineage>
</organism>
<keyword id="KW-0687">Ribonucleoprotein</keyword>
<keyword id="KW-0689">Ribosomal protein</keyword>
<reference key="1">
    <citation type="journal article" date="2004" name="Nat. Genet.">
        <title>Evidence in the Legionella pneumophila genome for exploitation of host cell functions and high genome plasticity.</title>
        <authorList>
            <person name="Cazalet C."/>
            <person name="Rusniok C."/>
            <person name="Brueggemann H."/>
            <person name="Zidane N."/>
            <person name="Magnier A."/>
            <person name="Ma L."/>
            <person name="Tichit M."/>
            <person name="Jarraud S."/>
            <person name="Bouchier C."/>
            <person name="Vandenesch F."/>
            <person name="Kunst F."/>
            <person name="Etienne J."/>
            <person name="Glaser P."/>
            <person name="Buchrieser C."/>
        </authorList>
    </citation>
    <scope>NUCLEOTIDE SEQUENCE [LARGE SCALE GENOMIC DNA]</scope>
    <source>
        <strain>Lens</strain>
    </source>
</reference>
<comment type="function">
    <text evidence="1">Involved in the binding of tRNA to the ribosomes.</text>
</comment>
<comment type="subunit">
    <text evidence="1">Part of the 30S ribosomal subunit.</text>
</comment>
<comment type="similarity">
    <text evidence="1">Belongs to the universal ribosomal protein uS10 family.</text>
</comment>
<name>RS10_LEGPL</name>
<accession>Q5WZL3</accession>
<sequence length="105" mass="11938">MSSNQNIKIRLKSFDHRLIDLSTREIVDTAKRTGAQIRGPIPLPIRKEKFTVLTSPHVNKDARDQYELRTHKRLVVIVHPTEKTVDALMKLDLAAGVDVQISLDD</sequence>
<protein>
    <recommendedName>
        <fullName evidence="1">Small ribosomal subunit protein uS10</fullName>
    </recommendedName>
    <alternativeName>
        <fullName evidence="2">30S ribosomal protein S10</fullName>
    </alternativeName>
</protein>